<organism>
    <name type="scientific">Shigella boydii serotype 4 (strain Sb227)</name>
    <dbReference type="NCBI Taxonomy" id="300268"/>
    <lineage>
        <taxon>Bacteria</taxon>
        <taxon>Pseudomonadati</taxon>
        <taxon>Pseudomonadota</taxon>
        <taxon>Gammaproteobacteria</taxon>
        <taxon>Enterobacterales</taxon>
        <taxon>Enterobacteriaceae</taxon>
        <taxon>Shigella</taxon>
    </lineage>
</organism>
<feature type="chain" id="PRO_0000230661" description="Ascorbate-specific PTS system EIIC component">
    <location>
        <begin position="1"/>
        <end position="456"/>
    </location>
</feature>
<feature type="transmembrane region" description="Helical" evidence="1">
    <location>
        <begin position="5"/>
        <end position="25"/>
    </location>
</feature>
<feature type="transmembrane region" description="Helical" evidence="1">
    <location>
        <begin position="29"/>
        <end position="49"/>
    </location>
</feature>
<feature type="transmembrane region" description="Helical" evidence="1">
    <location>
        <begin position="92"/>
        <end position="112"/>
    </location>
</feature>
<feature type="transmembrane region" description="Helical" evidence="1">
    <location>
        <begin position="132"/>
        <end position="152"/>
    </location>
</feature>
<feature type="transmembrane region" description="Helical" evidence="1">
    <location>
        <begin position="224"/>
        <end position="244"/>
    </location>
</feature>
<feature type="transmembrane region" description="Helical" evidence="1">
    <location>
        <begin position="254"/>
        <end position="274"/>
    </location>
</feature>
<feature type="transmembrane region" description="Helical" evidence="1">
    <location>
        <begin position="307"/>
        <end position="327"/>
    </location>
</feature>
<feature type="transmembrane region" description="Helical" evidence="1">
    <location>
        <begin position="329"/>
        <end position="349"/>
    </location>
</feature>
<feature type="transmembrane region" description="Helical" evidence="1">
    <location>
        <begin position="370"/>
        <end position="390"/>
    </location>
</feature>
<feature type="transmembrane region" description="Helical" evidence="1">
    <location>
        <begin position="418"/>
        <end position="438"/>
    </location>
</feature>
<feature type="binding site" evidence="1">
    <location>
        <begin position="77"/>
        <end position="78"/>
    </location>
    <ligand>
        <name>L-ascorbate</name>
        <dbReference type="ChEBI" id="CHEBI:38290"/>
    </ligand>
</feature>
<feature type="binding site" evidence="1">
    <location>
        <begin position="126"/>
        <end position="130"/>
    </location>
    <ligand>
        <name>L-ascorbate</name>
        <dbReference type="ChEBI" id="CHEBI:38290"/>
    </ligand>
</feature>
<feature type="binding site" evidence="1">
    <location>
        <begin position="185"/>
        <end position="186"/>
    </location>
    <ligand>
        <name>L-ascorbate</name>
        <dbReference type="ChEBI" id="CHEBI:38290"/>
    </ligand>
</feature>
<feature type="binding site" evidence="1">
    <location>
        <position position="305"/>
    </location>
    <ligand>
        <name>L-ascorbate</name>
        <dbReference type="ChEBI" id="CHEBI:38290"/>
    </ligand>
</feature>
<protein>
    <recommendedName>
        <fullName evidence="1">Ascorbate-specific PTS system EIIC component</fullName>
    </recommendedName>
    <alternativeName>
        <fullName evidence="1">Ascorbate-specific permease IIC component UlaA</fullName>
    </alternativeName>
</protein>
<dbReference type="EMBL" id="CP000036">
    <property type="protein sequence ID" value="ABB68684.1"/>
    <property type="status" value="ALT_INIT"/>
    <property type="molecule type" value="Genomic_DNA"/>
</dbReference>
<dbReference type="SMR" id="Q31TC4"/>
<dbReference type="KEGG" id="sbo:SBO_4262"/>
<dbReference type="HOGENOM" id="CLU_031784_1_0_6"/>
<dbReference type="Proteomes" id="UP000007067">
    <property type="component" value="Chromosome"/>
</dbReference>
<dbReference type="GO" id="GO:0005886">
    <property type="term" value="C:plasma membrane"/>
    <property type="evidence" value="ECO:0007669"/>
    <property type="project" value="UniProtKB-SubCell"/>
</dbReference>
<dbReference type="GO" id="GO:0009401">
    <property type="term" value="P:phosphoenolpyruvate-dependent sugar phosphotransferase system"/>
    <property type="evidence" value="ECO:0007669"/>
    <property type="project" value="UniProtKB-KW"/>
</dbReference>
<dbReference type="InterPro" id="IPR051562">
    <property type="entry name" value="Ascorbate-PTS_EIIC"/>
</dbReference>
<dbReference type="InterPro" id="IPR004703">
    <property type="entry name" value="PTS_sugar-sp_permease"/>
</dbReference>
<dbReference type="NCBIfam" id="NF006919">
    <property type="entry name" value="PRK09410.1-1"/>
    <property type="match status" value="1"/>
</dbReference>
<dbReference type="PANTHER" id="PTHR33843">
    <property type="entry name" value="ASCORBATE-SPECIFIC PTS SYSTEM EIIC COMPONENT"/>
    <property type="match status" value="1"/>
</dbReference>
<dbReference type="PANTHER" id="PTHR33843:SF4">
    <property type="entry name" value="ASCORBATE-SPECIFIC PTS SYSTEM EIIC COMPONENT"/>
    <property type="match status" value="1"/>
</dbReference>
<dbReference type="Pfam" id="PF03611">
    <property type="entry name" value="EIIC-GAT"/>
    <property type="match status" value="1"/>
</dbReference>
<proteinExistence type="inferred from homology"/>
<name>ULAA_SHIBS</name>
<evidence type="ECO:0000250" key="1">
    <source>
        <dbReference type="UniProtKB" id="P39301"/>
    </source>
</evidence>
<evidence type="ECO:0000305" key="2"/>
<gene>
    <name type="primary">ulaA</name>
    <name type="ordered locus">SBO_4262</name>
</gene>
<keyword id="KW-0997">Cell inner membrane</keyword>
<keyword id="KW-1003">Cell membrane</keyword>
<keyword id="KW-0472">Membrane</keyword>
<keyword id="KW-0598">Phosphotransferase system</keyword>
<keyword id="KW-0762">Sugar transport</keyword>
<keyword id="KW-0812">Transmembrane</keyword>
<keyword id="KW-1133">Transmembrane helix</keyword>
<keyword id="KW-0813">Transport</keyword>
<accession>Q31TC4</accession>
<sequence>MFFNQVMTNAPLLLGIVTCLGYILLRKSVSVIIKGTIKTIIGFMLLQAGSGILTSTFKPVVAKMSEVYGINGAISDTYASMMATIDRMGDAYSWVGYAVLLALALNICYVLLRRITGIRTIMLTGHIMFQQAGLIAVTLFIFGYSMWTTIICTAILVSLYWGITSNMMYKPTQEVTDGCGFSIGHQQQFASWIAYKVAPFLGKKEESVEDLKLPGWLNIFHDNIVSTAIVMTIFFGAILLSFGIDTVQAMAGKVNWTVYILQTGFSFAVAIFIITQGVRMFVAELSEAFNGISQRLIPGAVLAIDCAAIYSFAPNAVVWGFMWGTIGQLIAVGILVACGSSILIIPGFIPMFFSNATIGVFANHFGGWRAALKICLVMGMIEIFGCVWAVKLTGMSAWMGMADWSILAPPMMQGFFSIGIAFMAVIIVIALAYMFFAGRALRAEEDAEKQLAEQSA</sequence>
<comment type="function">
    <text evidence="1">The phosphoenolpyruvate-dependent sugar phosphotransferase system (sugar PTS), a major carbohydrate active transport system, catalyzes the phosphorylation of incoming sugar substrates concomitantly with their translocation across the cell membrane. The enzyme II UlaABC PTS system is involved in ascorbate transport.</text>
</comment>
<comment type="subunit">
    <text evidence="1">Homodimer.</text>
</comment>
<comment type="subcellular location">
    <subcellularLocation>
        <location evidence="1">Cell inner membrane</location>
        <topology evidence="1">Multi-pass membrane protein</topology>
    </subcellularLocation>
</comment>
<comment type="induction">
    <text evidence="1">Induced by L-ascorbate. Repressed by UlaR.</text>
</comment>
<comment type="domain">
    <text evidence="1">In classical PTS systems, the PTS EIIC type-2 domain forms the translocation channel and contains the specific substrate-binding site. UlaA does not exhibit the topological features of any recognized enzyme IIC.</text>
</comment>
<comment type="similarity">
    <text evidence="2">Belongs to the UlaA family.</text>
</comment>
<comment type="sequence caution" evidence="2">
    <conflict type="erroneous initiation">
        <sequence resource="EMBL-CDS" id="ABB68684"/>
    </conflict>
</comment>
<reference key="1">
    <citation type="journal article" date="2005" name="Nucleic Acids Res.">
        <title>Genome dynamics and diversity of Shigella species, the etiologic agents of bacillary dysentery.</title>
        <authorList>
            <person name="Yang F."/>
            <person name="Yang J."/>
            <person name="Zhang X."/>
            <person name="Chen L."/>
            <person name="Jiang Y."/>
            <person name="Yan Y."/>
            <person name="Tang X."/>
            <person name="Wang J."/>
            <person name="Xiong Z."/>
            <person name="Dong J."/>
            <person name="Xue Y."/>
            <person name="Zhu Y."/>
            <person name="Xu X."/>
            <person name="Sun L."/>
            <person name="Chen S."/>
            <person name="Nie H."/>
            <person name="Peng J."/>
            <person name="Xu J."/>
            <person name="Wang Y."/>
            <person name="Yuan Z."/>
            <person name="Wen Y."/>
            <person name="Yao Z."/>
            <person name="Shen Y."/>
            <person name="Qiang B."/>
            <person name="Hou Y."/>
            <person name="Yu J."/>
            <person name="Jin Q."/>
        </authorList>
    </citation>
    <scope>NUCLEOTIDE SEQUENCE [LARGE SCALE GENOMIC DNA]</scope>
    <source>
        <strain>Sb227</strain>
    </source>
</reference>